<gene>
    <name type="ORF">F38B6.6</name>
</gene>
<name>TMTC1_CAEEL</name>
<evidence type="ECO:0000250" key="1">
    <source>
        <dbReference type="UniProtKB" id="Q8IUR5"/>
    </source>
</evidence>
<evidence type="ECO:0000255" key="2"/>
<evidence type="ECO:0000255" key="3">
    <source>
        <dbReference type="PROSITE-ProRule" id="PRU00339"/>
    </source>
</evidence>
<evidence type="ECO:0000255" key="4">
    <source>
        <dbReference type="PROSITE-ProRule" id="PRU00498"/>
    </source>
</evidence>
<evidence type="ECO:0000256" key="5">
    <source>
        <dbReference type="SAM" id="MobiDB-lite"/>
    </source>
</evidence>
<evidence type="ECO:0000305" key="6"/>
<reference key="1">
    <citation type="journal article" date="1998" name="Science">
        <title>Genome sequence of the nematode C. elegans: a platform for investigating biology.</title>
        <authorList>
            <consortium name="The C. elegans sequencing consortium"/>
        </authorList>
    </citation>
    <scope>NUCLEOTIDE SEQUENCE [LARGE SCALE GENOMIC DNA]</scope>
    <source>
        <strain>Bristol N2</strain>
    </source>
</reference>
<organism>
    <name type="scientific">Caenorhabditis elegans</name>
    <dbReference type="NCBI Taxonomy" id="6239"/>
    <lineage>
        <taxon>Eukaryota</taxon>
        <taxon>Metazoa</taxon>
        <taxon>Ecdysozoa</taxon>
        <taxon>Nematoda</taxon>
        <taxon>Chromadorea</taxon>
        <taxon>Rhabditida</taxon>
        <taxon>Rhabditina</taxon>
        <taxon>Rhabditomorpha</taxon>
        <taxon>Rhabditoidea</taxon>
        <taxon>Rhabditidae</taxon>
        <taxon>Peloderinae</taxon>
        <taxon>Caenorhabditis</taxon>
    </lineage>
</organism>
<comment type="function">
    <text evidence="1">Transfers mannosyl residues to the hydroxyl group of serine or threonine residues.</text>
</comment>
<comment type="catalytic activity">
    <reaction evidence="1">
        <text>a di-trans,poly-cis-dolichyl beta-D-mannosyl phosphate + L-seryl-[protein] = 3-O-(alpha-D-mannosyl)-L-seryl-[protein] + a di-trans,poly-cis-dolichyl phosphate + H(+)</text>
        <dbReference type="Rhea" id="RHEA:17377"/>
        <dbReference type="Rhea" id="RHEA-COMP:9863"/>
        <dbReference type="Rhea" id="RHEA-COMP:13546"/>
        <dbReference type="Rhea" id="RHEA-COMP:19498"/>
        <dbReference type="Rhea" id="RHEA-COMP:19501"/>
        <dbReference type="ChEBI" id="CHEBI:15378"/>
        <dbReference type="ChEBI" id="CHEBI:29999"/>
        <dbReference type="ChEBI" id="CHEBI:57683"/>
        <dbReference type="ChEBI" id="CHEBI:58211"/>
        <dbReference type="ChEBI" id="CHEBI:137321"/>
        <dbReference type="EC" id="2.4.1.109"/>
    </reaction>
</comment>
<comment type="catalytic activity">
    <reaction evidence="1">
        <text>a di-trans,poly-cis-dolichyl beta-D-mannosyl phosphate + L-threonyl-[protein] = 3-O-(alpha-D-mannosyl)-L-threonyl-[protein] + a di-trans,poly-cis-dolichyl phosphate + H(+)</text>
        <dbReference type="Rhea" id="RHEA:53396"/>
        <dbReference type="Rhea" id="RHEA-COMP:11060"/>
        <dbReference type="Rhea" id="RHEA-COMP:13547"/>
        <dbReference type="Rhea" id="RHEA-COMP:19498"/>
        <dbReference type="Rhea" id="RHEA-COMP:19501"/>
        <dbReference type="ChEBI" id="CHEBI:15378"/>
        <dbReference type="ChEBI" id="CHEBI:30013"/>
        <dbReference type="ChEBI" id="CHEBI:57683"/>
        <dbReference type="ChEBI" id="CHEBI:58211"/>
        <dbReference type="ChEBI" id="CHEBI:137323"/>
        <dbReference type="EC" id="2.4.1.109"/>
    </reaction>
</comment>
<comment type="pathway">
    <text evidence="1">Protein modification; protein glycosylation.</text>
</comment>
<comment type="subcellular location">
    <subcellularLocation>
        <location evidence="2">Membrane</location>
        <topology evidence="2">Multi-pass membrane protein</topology>
    </subcellularLocation>
    <subcellularLocation>
        <location evidence="1">Endoplasmic reticulum</location>
    </subcellularLocation>
</comment>
<comment type="similarity">
    <text evidence="6">Belongs to the TMTC family.</text>
</comment>
<feature type="chain" id="PRO_0000280297" description="Protein O-mannosyl-transferase F38B6.6">
    <location>
        <begin position="1"/>
        <end position="690"/>
    </location>
</feature>
<feature type="topological domain" description="Cytoplasmic" evidence="6">
    <location>
        <begin position="1"/>
        <end position="32"/>
    </location>
</feature>
<feature type="transmembrane region" description="Helical" evidence="2">
    <location>
        <begin position="33"/>
        <end position="53"/>
    </location>
</feature>
<feature type="topological domain" description="Extracellular" evidence="6">
    <location>
        <begin position="54"/>
        <end position="110"/>
    </location>
</feature>
<feature type="transmembrane region" description="Helical" evidence="2">
    <location>
        <begin position="111"/>
        <end position="131"/>
    </location>
</feature>
<feature type="topological domain" description="Cytoplasmic" evidence="6">
    <location>
        <begin position="132"/>
        <end position="138"/>
    </location>
</feature>
<feature type="transmembrane region" description="Helical" evidence="2">
    <location>
        <begin position="139"/>
        <end position="159"/>
    </location>
</feature>
<feature type="topological domain" description="Extracellular" evidence="6">
    <location>
        <begin position="160"/>
        <end position="166"/>
    </location>
</feature>
<feature type="transmembrane region" description="Helical" evidence="2">
    <location>
        <begin position="167"/>
        <end position="187"/>
    </location>
</feature>
<feature type="topological domain" description="Cytoplasmic" evidence="6">
    <location>
        <begin position="188"/>
        <end position="234"/>
    </location>
</feature>
<feature type="transmembrane region" description="Helical" evidence="2">
    <location>
        <begin position="235"/>
        <end position="255"/>
    </location>
</feature>
<feature type="topological domain" description="Extracellular" evidence="6">
    <location>
        <begin position="256"/>
        <end position="273"/>
    </location>
</feature>
<feature type="transmembrane region" description="Helical" evidence="2">
    <location>
        <begin position="274"/>
        <end position="294"/>
    </location>
</feature>
<feature type="topological domain" description="Cytoplasmic" evidence="6">
    <location>
        <begin position="295"/>
        <end position="307"/>
    </location>
</feature>
<feature type="transmembrane region" description="Helical" evidence="2">
    <location>
        <begin position="308"/>
        <end position="328"/>
    </location>
</feature>
<feature type="topological domain" description="Extracellular" evidence="6">
    <location>
        <begin position="329"/>
        <end position="341"/>
    </location>
</feature>
<feature type="transmembrane region" description="Helical" evidence="2">
    <location>
        <begin position="342"/>
        <end position="362"/>
    </location>
</feature>
<feature type="topological domain" description="Cytoplasmic" evidence="6">
    <location>
        <begin position="363"/>
        <end position="365"/>
    </location>
</feature>
<feature type="transmembrane region" description="Helical" evidence="2">
    <location>
        <begin position="366"/>
        <end position="386"/>
    </location>
</feature>
<feature type="topological domain" description="Extracellular" evidence="6">
    <location>
        <begin position="387"/>
        <end position="690"/>
    </location>
</feature>
<feature type="repeat" description="TPR 1" evidence="3">
    <location>
        <begin position="398"/>
        <end position="431"/>
    </location>
</feature>
<feature type="repeat" description="TPR 2" evidence="3">
    <location>
        <begin position="432"/>
        <end position="465"/>
    </location>
</feature>
<feature type="repeat" description="TPR 3" evidence="3">
    <location>
        <begin position="466"/>
        <end position="499"/>
    </location>
</feature>
<feature type="repeat" description="TPR 4" evidence="3">
    <location>
        <begin position="500"/>
        <end position="533"/>
    </location>
</feature>
<feature type="repeat" description="TPR 5" evidence="3">
    <location>
        <begin position="534"/>
        <end position="567"/>
    </location>
</feature>
<feature type="repeat" description="TPR 6" evidence="3">
    <location>
        <begin position="602"/>
        <end position="635"/>
    </location>
</feature>
<feature type="repeat" description="TPR 7" evidence="3">
    <location>
        <begin position="636"/>
        <end position="669"/>
    </location>
</feature>
<feature type="region of interest" description="Disordered" evidence="5">
    <location>
        <begin position="1"/>
        <end position="24"/>
    </location>
</feature>
<feature type="compositionally biased region" description="Basic and acidic residues" evidence="5">
    <location>
        <begin position="15"/>
        <end position="24"/>
    </location>
</feature>
<feature type="glycosylation site" description="N-linked (GlcNAc...) asparagine" evidence="4">
    <location>
        <position position="166"/>
    </location>
</feature>
<feature type="glycosylation site" description="N-linked (GlcNAc...) asparagine" evidence="4">
    <location>
        <position position="559"/>
    </location>
</feature>
<feature type="glycosylation site" description="N-linked (GlcNAc...) asparagine" evidence="4">
    <location>
        <position position="600"/>
    </location>
</feature>
<feature type="glycosylation site" description="N-linked (GlcNAc...) asparagine" evidence="4">
    <location>
        <position position="617"/>
    </location>
</feature>
<feature type="glycosylation site" description="N-linked (GlcNAc...) asparagine" evidence="4">
    <location>
        <position position="686"/>
    </location>
</feature>
<sequence>MKKHLHHKVSGSCDPGDRSPKEKGRSQGIRNLLILISLSIIPYLSCLGGDFVFDDAESIVNNPIVNGKDPLLQIFSRDFWGRSISSSNSHKSYRPVTTFTFWLNYKLHETSTLGYHVVNIICHTVATLVFYKLGKQLEHIFDFFNIAFSASILFAVHPVHTEAVANITGRAELLMTIFSLAALILHVKNREINCKFVLLVILSTLSKEQGLMTIPIAICIDFLAHRSCRSNFVRMICLLVAIGFLRMMVNGFEAAKFTKLDNPTAFLNSKFYRMINYTYIWLYHAYLLVIPVNLCFDYSMGCISSITTMWDLRALSPVLIFTIVIIGVKFQNECRAFTLSSLMGIISFLPASNIFFTVGFSIAERVLYLPSAGFCLLCAIIFKKLSVHFKNADVLSITLILLLISKTYRRSGEWKTELSLYSSGLSVCPTNAKIHYNLGKVLGDNGLTKDAEKNYWNAIKLDPSYEQALNNLGNLLEKSGDSKTAESLLARAVTLRPSFAVAWMNLGISQMNLKKYYEAEKSLKNSLLIRPNSAHCLFNLGVLYQRTNRDEMAMSAWKNATRIDPSHSQSWTNLFVVLDHLSQCSQVIDLSYQALSSVPNESRVHMQIGSCHAKHSNFTAAENHIKSAIDLNPTSVLFHANLGILYQRMSRHKEAESQYRIVLALDSKNIVAKQNLQKLEEHNCYNSTLP</sequence>
<accession>Q20144</accession>
<dbReference type="EC" id="2.4.1.109" evidence="1"/>
<dbReference type="EMBL" id="FO080973">
    <property type="protein sequence ID" value="CCD68214.1"/>
    <property type="molecule type" value="Genomic_DNA"/>
</dbReference>
<dbReference type="PIR" id="T16298">
    <property type="entry name" value="T16298"/>
</dbReference>
<dbReference type="RefSeq" id="NP_509123.2">
    <property type="nucleotide sequence ID" value="NM_076722.5"/>
</dbReference>
<dbReference type="SMR" id="Q20144"/>
<dbReference type="FunCoup" id="Q20144">
    <property type="interactions" value="824"/>
</dbReference>
<dbReference type="STRING" id="6239.F38B6.6.1"/>
<dbReference type="PaxDb" id="6239-F38B6.6.1"/>
<dbReference type="EnsemblMetazoa" id="F38B6.6.1">
    <property type="protein sequence ID" value="F38B6.6.1"/>
    <property type="gene ID" value="WBGene00018175"/>
</dbReference>
<dbReference type="GeneID" id="185454"/>
<dbReference type="KEGG" id="cel:CELE_F38B6.6"/>
<dbReference type="UCSC" id="F38B6.6">
    <property type="organism name" value="c. elegans"/>
</dbReference>
<dbReference type="AGR" id="WB:WBGene00018175"/>
<dbReference type="CTD" id="185454"/>
<dbReference type="WormBase" id="F38B6.6">
    <property type="protein sequence ID" value="CE30976"/>
    <property type="gene ID" value="WBGene00018175"/>
</dbReference>
<dbReference type="eggNOG" id="KOG1124">
    <property type="taxonomic scope" value="Eukaryota"/>
</dbReference>
<dbReference type="GeneTree" id="ENSGT00940000158521"/>
<dbReference type="HOGENOM" id="CLU_011615_2_0_1"/>
<dbReference type="InParanoid" id="Q20144"/>
<dbReference type="OMA" id="RVICEIQ"/>
<dbReference type="OrthoDB" id="19588at2759"/>
<dbReference type="PhylomeDB" id="Q20144"/>
<dbReference type="UniPathway" id="UPA00378"/>
<dbReference type="PRO" id="PR:Q20144"/>
<dbReference type="Proteomes" id="UP000001940">
    <property type="component" value="Chromosome X"/>
</dbReference>
<dbReference type="Bgee" id="WBGene00018175">
    <property type="expression patterns" value="Expressed in pharyngeal muscle cell (C elegans) and 3 other cell types or tissues"/>
</dbReference>
<dbReference type="GO" id="GO:0005783">
    <property type="term" value="C:endoplasmic reticulum"/>
    <property type="evidence" value="ECO:0000318"/>
    <property type="project" value="GO_Central"/>
</dbReference>
<dbReference type="GO" id="GO:0016020">
    <property type="term" value="C:membrane"/>
    <property type="evidence" value="ECO:0007669"/>
    <property type="project" value="UniProtKB-SubCell"/>
</dbReference>
<dbReference type="GO" id="GO:0004169">
    <property type="term" value="F:dolichyl-phosphate-mannose-protein mannosyltransferase activity"/>
    <property type="evidence" value="ECO:0000250"/>
    <property type="project" value="UniProtKB"/>
</dbReference>
<dbReference type="GO" id="GO:0000030">
    <property type="term" value="F:mannosyltransferase activity"/>
    <property type="evidence" value="ECO:0000318"/>
    <property type="project" value="GO_Central"/>
</dbReference>
<dbReference type="GO" id="GO:0030968">
    <property type="term" value="P:endoplasmic reticulum unfolded protein response"/>
    <property type="evidence" value="ECO:0000318"/>
    <property type="project" value="GO_Central"/>
</dbReference>
<dbReference type="GO" id="GO:0035269">
    <property type="term" value="P:protein O-linked mannosylation"/>
    <property type="evidence" value="ECO:0000250"/>
    <property type="project" value="UniProtKB"/>
</dbReference>
<dbReference type="Gene3D" id="1.25.40.10">
    <property type="entry name" value="Tetratricopeptide repeat domain"/>
    <property type="match status" value="2"/>
</dbReference>
<dbReference type="InterPro" id="IPR052346">
    <property type="entry name" value="O-mannosyl-transferase_TMTC"/>
</dbReference>
<dbReference type="InterPro" id="IPR013618">
    <property type="entry name" value="TMTC_DUF1736"/>
</dbReference>
<dbReference type="InterPro" id="IPR011990">
    <property type="entry name" value="TPR-like_helical_dom_sf"/>
</dbReference>
<dbReference type="InterPro" id="IPR019734">
    <property type="entry name" value="TPR_rpt"/>
</dbReference>
<dbReference type="PANTHER" id="PTHR44227">
    <property type="match status" value="1"/>
</dbReference>
<dbReference type="PANTHER" id="PTHR44227:SF3">
    <property type="entry name" value="PROTEIN O-MANNOSYL-TRANSFERASE TMTC4"/>
    <property type="match status" value="1"/>
</dbReference>
<dbReference type="Pfam" id="PF08409">
    <property type="entry name" value="TMTC_DUF1736"/>
    <property type="match status" value="1"/>
</dbReference>
<dbReference type="Pfam" id="PF13431">
    <property type="entry name" value="TPR_17"/>
    <property type="match status" value="1"/>
</dbReference>
<dbReference type="Pfam" id="PF13181">
    <property type="entry name" value="TPR_8"/>
    <property type="match status" value="2"/>
</dbReference>
<dbReference type="SMART" id="SM00028">
    <property type="entry name" value="TPR"/>
    <property type="match status" value="7"/>
</dbReference>
<dbReference type="SUPFAM" id="SSF48452">
    <property type="entry name" value="TPR-like"/>
    <property type="match status" value="1"/>
</dbReference>
<dbReference type="PROSITE" id="PS50005">
    <property type="entry name" value="TPR"/>
    <property type="match status" value="7"/>
</dbReference>
<dbReference type="PROSITE" id="PS50293">
    <property type="entry name" value="TPR_REGION"/>
    <property type="match status" value="1"/>
</dbReference>
<protein>
    <recommendedName>
        <fullName>Protein O-mannosyl-transferase F38B6.6</fullName>
        <ecNumber evidence="1">2.4.1.109</ecNumber>
    </recommendedName>
    <alternativeName>
        <fullName evidence="1">Transmembrane O-mannosyltransferase targeting cadherins 1</fullName>
    </alternativeName>
    <alternativeName>
        <fullName evidence="1">Transmembrane and tetratricopeptide repeat-containing 1</fullName>
        <shortName>TMTC1</shortName>
    </alternativeName>
</protein>
<keyword id="KW-0256">Endoplasmic reticulum</keyword>
<keyword id="KW-0325">Glycoprotein</keyword>
<keyword id="KW-0472">Membrane</keyword>
<keyword id="KW-1185">Reference proteome</keyword>
<keyword id="KW-0677">Repeat</keyword>
<keyword id="KW-0802">TPR repeat</keyword>
<keyword id="KW-0808">Transferase</keyword>
<keyword id="KW-0812">Transmembrane</keyword>
<keyword id="KW-1133">Transmembrane helix</keyword>
<proteinExistence type="inferred from homology"/>